<name>COX8A_MACSL</name>
<accession>Q863G8</accession>
<reference key="1">
    <citation type="journal article" date="2003" name="Proc. Natl. Acad. Sci. U.S.A.">
        <title>Adaptive evolution of cytochrome c oxidase subunit VIII in anthropoid primates.</title>
        <authorList>
            <person name="Goldberg A."/>
            <person name="Wildman D.E."/>
            <person name="Schmidt T.R."/>
            <person name="Huttemann M."/>
            <person name="Goodman M."/>
            <person name="Weiss M.L."/>
            <person name="Grossman L.I."/>
        </authorList>
    </citation>
    <scope>NUCLEOTIDE SEQUENCE [MRNA]</scope>
</reference>
<comment type="function">
    <text evidence="1">Component of the cytochrome c oxidase, the last enzyme in the mitochondrial electron transport chain which drives oxidative phosphorylation. The respiratory chain contains 3 multisubunit complexes succinate dehydrogenase (complex II, CII), ubiquinol-cytochrome c oxidoreductase (cytochrome b-c1 complex, complex III, CIII) and cytochrome c oxidase (complex IV, CIV), that cooperate to transfer electrons derived from NADH and succinate to molecular oxygen, creating an electrochemical gradient over the inner membrane that drives transmembrane transport and the ATP synthase. Cytochrome c oxidase is the component of the respiratory chain that catalyzes the reduction of oxygen to water. Electrons originating from reduced cytochrome c in the intermembrane space (IMS) are transferred via the dinuclear copper A center (CU(A)) of subunit 2 and heme A of subunit 1 to the active site in subunit 1, a binuclear center (BNC) formed by heme A3 and copper B (CU(B)). The BNC reduces molecular oxygen to 2 water molecules using 4 electrons from cytochrome c in the IMS and 4 protons from the mitochondrial matrix.</text>
</comment>
<comment type="pathway">
    <text evidence="1">Energy metabolism; oxidative phosphorylation.</text>
</comment>
<comment type="subunit">
    <text evidence="2">Component of the cytochrome c oxidase (complex IV, CIV), a multisubunit enzyme composed of 14 subunits. The complex is composed of a catalytic core of 3 subunits MT-CO1, MT-CO2 and MT-CO3, encoded in the mitochondrial DNA, and 11 supernumerary subunits COX4I, COX5A, COX5B, COX6A, COX6B, COX6C, COX7A, COX7B, COX7C, COX8 and NDUFA4, which are encoded in the nuclear genome. The complex exists as a monomer or a dimer and forms supercomplexes (SCs) in the inner mitochondrial membrane with NADH-ubiquinone oxidoreductase (complex I, CI) and ubiquinol-cytochrome c oxidoreductase (cytochrome b-c1 complex, complex III, CIII), resulting in different assemblies (supercomplex SCI(1)III(2)IV(1) and megacomplex MCI(2)III(2)IV(2)).</text>
</comment>
<comment type="subcellular location">
    <subcellularLocation>
        <location evidence="2">Mitochondrion inner membrane</location>
        <topology evidence="2">Single-pass membrane protein</topology>
    </subcellularLocation>
</comment>
<comment type="PTM">
    <text evidence="2">In response to mitochondrial stress, the precursor protein is ubiquitinated by the SIFI complex in the cytoplasm before mitochondrial import, leading to its degradation. Within the SIFI complex, UBR4 initiates ubiquitin chain that are further elongated or branched by KCMF1.</text>
</comment>
<comment type="similarity">
    <text evidence="3">Belongs to the cytochrome c oxidase VIII family.</text>
</comment>
<protein>
    <recommendedName>
        <fullName>Cytochrome c oxidase subunit 8A, mitochondrial</fullName>
    </recommendedName>
    <alternativeName>
        <fullName>Cytochrome c oxidase polypeptide VIII-liver</fullName>
    </alternativeName>
    <alternativeName>
        <fullName>Cytochrome c oxidase subunit 8-2</fullName>
    </alternativeName>
</protein>
<organism>
    <name type="scientific">Macaca silenus</name>
    <name type="common">Lion-tailed macaque</name>
    <dbReference type="NCBI Taxonomy" id="54601"/>
    <lineage>
        <taxon>Eukaryota</taxon>
        <taxon>Metazoa</taxon>
        <taxon>Chordata</taxon>
        <taxon>Craniata</taxon>
        <taxon>Vertebrata</taxon>
        <taxon>Euteleostomi</taxon>
        <taxon>Mammalia</taxon>
        <taxon>Eutheria</taxon>
        <taxon>Euarchontoglires</taxon>
        <taxon>Primates</taxon>
        <taxon>Haplorrhini</taxon>
        <taxon>Catarrhini</taxon>
        <taxon>Cercopithecidae</taxon>
        <taxon>Cercopithecinae</taxon>
        <taxon>Macaca</taxon>
    </lineage>
</organism>
<feature type="transit peptide" description="Mitochondrion" evidence="2">
    <location>
        <begin position="1"/>
        <end position="25"/>
    </location>
</feature>
<feature type="chain" id="PRO_0000251170" description="Cytochrome c oxidase subunit 8A, mitochondrial">
    <location>
        <begin position="26"/>
        <end position="69"/>
    </location>
</feature>
<feature type="topological domain" description="Mitochondrial matrix" evidence="2">
    <location>
        <begin position="26"/>
        <end position="36"/>
    </location>
</feature>
<feature type="transmembrane region" description="Helical" evidence="1">
    <location>
        <begin position="37"/>
        <end position="60"/>
    </location>
</feature>
<feature type="topological domain" description="Mitochondrial intermembrane" evidence="2">
    <location>
        <begin position="61"/>
        <end position="69"/>
    </location>
</feature>
<feature type="short sequence motif" description="SIFI-degron" evidence="2">
    <location>
        <begin position="2"/>
        <end position="19"/>
    </location>
</feature>
<evidence type="ECO:0000250" key="1">
    <source>
        <dbReference type="UniProtKB" id="P10175"/>
    </source>
</evidence>
<evidence type="ECO:0000250" key="2">
    <source>
        <dbReference type="UniProtKB" id="P10176"/>
    </source>
</evidence>
<evidence type="ECO:0000305" key="3"/>
<keyword id="KW-0472">Membrane</keyword>
<keyword id="KW-0496">Mitochondrion</keyword>
<keyword id="KW-0999">Mitochondrion inner membrane</keyword>
<keyword id="KW-0809">Transit peptide</keyword>
<keyword id="KW-0812">Transmembrane</keyword>
<keyword id="KW-1133">Transmembrane helix</keyword>
<keyword id="KW-0832">Ubl conjugation</keyword>
<dbReference type="EMBL" id="AY254818">
    <property type="protein sequence ID" value="AAP32249.1"/>
    <property type="molecule type" value="mRNA"/>
</dbReference>
<dbReference type="SMR" id="Q863G8"/>
<dbReference type="UniPathway" id="UPA00705"/>
<dbReference type="GO" id="GO:0005743">
    <property type="term" value="C:mitochondrial inner membrane"/>
    <property type="evidence" value="ECO:0007669"/>
    <property type="project" value="UniProtKB-SubCell"/>
</dbReference>
<dbReference type="GO" id="GO:0045277">
    <property type="term" value="C:respiratory chain complex IV"/>
    <property type="evidence" value="ECO:0007669"/>
    <property type="project" value="InterPro"/>
</dbReference>
<dbReference type="GO" id="GO:0006123">
    <property type="term" value="P:mitochondrial electron transport, cytochrome c to oxygen"/>
    <property type="evidence" value="ECO:0007669"/>
    <property type="project" value="InterPro"/>
</dbReference>
<dbReference type="CDD" id="cd00930">
    <property type="entry name" value="Cyt_c_Oxidase_VIII"/>
    <property type="match status" value="1"/>
</dbReference>
<dbReference type="FunFam" id="4.10.81.10:FF:000001">
    <property type="entry name" value="Cytochrome c oxidase subunit 8B, mitochondrial"/>
    <property type="match status" value="1"/>
</dbReference>
<dbReference type="Gene3D" id="4.10.81.10">
    <property type="entry name" value="Cytochrome c oxidase, subunit 8"/>
    <property type="match status" value="1"/>
</dbReference>
<dbReference type="InterPro" id="IPR003205">
    <property type="entry name" value="Cyt_c_oxidase_su8"/>
</dbReference>
<dbReference type="InterPro" id="IPR036548">
    <property type="entry name" value="Cyt_c_oxidase_su8_sf"/>
</dbReference>
<dbReference type="PANTHER" id="PTHR16717">
    <property type="entry name" value="CYTOCHROME C OXIDASE POLYPEPTIDE VIII"/>
    <property type="match status" value="1"/>
</dbReference>
<dbReference type="PANTHER" id="PTHR16717:SF1">
    <property type="entry name" value="CYTOCHROME C OXIDASE SUBUNIT 8A, MITOCHONDRIAL"/>
    <property type="match status" value="1"/>
</dbReference>
<dbReference type="Pfam" id="PF02285">
    <property type="entry name" value="COX8"/>
    <property type="match status" value="1"/>
</dbReference>
<dbReference type="SUPFAM" id="SSF81431">
    <property type="entry name" value="Mitochondrial cytochrome c oxidase subunit VIIIb (aka IX)"/>
    <property type="match status" value="1"/>
</dbReference>
<gene>
    <name type="primary">COX8A</name>
    <name type="synonym">COX8</name>
    <name type="synonym">COX8L</name>
</gene>
<proteinExistence type="inferred from homology"/>
<sequence>MSVLTSLLLRGLTGSARWLPVPRAKVHSMPPEVELGIMEKAIGLTSCFVSLFLPAGWILSHLEDYKRPE</sequence>